<protein>
    <recommendedName>
        <fullName evidence="1">Protein translocase subunit SecA</fullName>
        <ecNumber evidence="1">7.4.2.8</ecNumber>
    </recommendedName>
</protein>
<gene>
    <name evidence="1" type="primary">secA</name>
    <name type="ordered locus">XCC0734</name>
</gene>
<accession>Q8PCJ2</accession>
<dbReference type="EC" id="7.4.2.8" evidence="1"/>
<dbReference type="EMBL" id="AE008922">
    <property type="protein sequence ID" value="AAM40049.1"/>
    <property type="molecule type" value="Genomic_DNA"/>
</dbReference>
<dbReference type="RefSeq" id="NP_636125.1">
    <property type="nucleotide sequence ID" value="NC_003902.1"/>
</dbReference>
<dbReference type="RefSeq" id="WP_011035970.1">
    <property type="nucleotide sequence ID" value="NC_003902.1"/>
</dbReference>
<dbReference type="SMR" id="Q8PCJ2"/>
<dbReference type="STRING" id="190485.XCC0734"/>
<dbReference type="EnsemblBacteria" id="AAM40049">
    <property type="protein sequence ID" value="AAM40049"/>
    <property type="gene ID" value="XCC0734"/>
</dbReference>
<dbReference type="GeneID" id="58014699"/>
<dbReference type="KEGG" id="xcc:XCC0734"/>
<dbReference type="PATRIC" id="fig|190485.4.peg.799"/>
<dbReference type="eggNOG" id="COG0653">
    <property type="taxonomic scope" value="Bacteria"/>
</dbReference>
<dbReference type="HOGENOM" id="CLU_005314_3_0_6"/>
<dbReference type="OrthoDB" id="9805579at2"/>
<dbReference type="Proteomes" id="UP000001010">
    <property type="component" value="Chromosome"/>
</dbReference>
<dbReference type="GO" id="GO:0031522">
    <property type="term" value="C:cell envelope Sec protein transport complex"/>
    <property type="evidence" value="ECO:0000318"/>
    <property type="project" value="GO_Central"/>
</dbReference>
<dbReference type="GO" id="GO:0005737">
    <property type="term" value="C:cytoplasm"/>
    <property type="evidence" value="ECO:0007669"/>
    <property type="project" value="UniProtKB-SubCell"/>
</dbReference>
<dbReference type="GO" id="GO:0005886">
    <property type="term" value="C:plasma membrane"/>
    <property type="evidence" value="ECO:0000318"/>
    <property type="project" value="GO_Central"/>
</dbReference>
<dbReference type="GO" id="GO:0005524">
    <property type="term" value="F:ATP binding"/>
    <property type="evidence" value="ECO:0000318"/>
    <property type="project" value="GO_Central"/>
</dbReference>
<dbReference type="GO" id="GO:0046872">
    <property type="term" value="F:metal ion binding"/>
    <property type="evidence" value="ECO:0007669"/>
    <property type="project" value="UniProtKB-KW"/>
</dbReference>
<dbReference type="GO" id="GO:0008564">
    <property type="term" value="F:protein-exporting ATPase activity"/>
    <property type="evidence" value="ECO:0007669"/>
    <property type="project" value="UniProtKB-EC"/>
</dbReference>
<dbReference type="GO" id="GO:0065002">
    <property type="term" value="P:intracellular protein transmembrane transport"/>
    <property type="evidence" value="ECO:0007669"/>
    <property type="project" value="UniProtKB-UniRule"/>
</dbReference>
<dbReference type="GO" id="GO:0017038">
    <property type="term" value="P:protein import"/>
    <property type="evidence" value="ECO:0007669"/>
    <property type="project" value="InterPro"/>
</dbReference>
<dbReference type="GO" id="GO:0006605">
    <property type="term" value="P:protein targeting"/>
    <property type="evidence" value="ECO:0007669"/>
    <property type="project" value="UniProtKB-UniRule"/>
</dbReference>
<dbReference type="GO" id="GO:0043952">
    <property type="term" value="P:protein transport by the Sec complex"/>
    <property type="evidence" value="ECO:0000318"/>
    <property type="project" value="GO_Central"/>
</dbReference>
<dbReference type="CDD" id="cd17928">
    <property type="entry name" value="DEXDc_SecA"/>
    <property type="match status" value="1"/>
</dbReference>
<dbReference type="CDD" id="cd18803">
    <property type="entry name" value="SF2_C_secA"/>
    <property type="match status" value="1"/>
</dbReference>
<dbReference type="FunFam" id="3.40.50.300:FF:000081">
    <property type="entry name" value="Preprotein translocase subunit SecA"/>
    <property type="match status" value="1"/>
</dbReference>
<dbReference type="FunFam" id="3.40.50.300:FF:000113">
    <property type="entry name" value="Preprotein translocase subunit SecA"/>
    <property type="match status" value="1"/>
</dbReference>
<dbReference type="FunFam" id="3.90.1440.10:FF:000001">
    <property type="entry name" value="Preprotein translocase subunit SecA"/>
    <property type="match status" value="1"/>
</dbReference>
<dbReference type="FunFam" id="1.10.3060.10:FF:000003">
    <property type="entry name" value="Protein translocase subunit SecA"/>
    <property type="match status" value="1"/>
</dbReference>
<dbReference type="Gene3D" id="1.10.3060.10">
    <property type="entry name" value="Helical scaffold and wing domains of SecA"/>
    <property type="match status" value="1"/>
</dbReference>
<dbReference type="Gene3D" id="3.40.50.300">
    <property type="entry name" value="P-loop containing nucleotide triphosphate hydrolases"/>
    <property type="match status" value="2"/>
</dbReference>
<dbReference type="Gene3D" id="3.90.1440.10">
    <property type="entry name" value="SecA, preprotein cross-linking domain"/>
    <property type="match status" value="1"/>
</dbReference>
<dbReference type="HAMAP" id="MF_01382">
    <property type="entry name" value="SecA"/>
    <property type="match status" value="1"/>
</dbReference>
<dbReference type="InterPro" id="IPR014001">
    <property type="entry name" value="Helicase_ATP-bd"/>
</dbReference>
<dbReference type="InterPro" id="IPR001650">
    <property type="entry name" value="Helicase_C-like"/>
</dbReference>
<dbReference type="InterPro" id="IPR027417">
    <property type="entry name" value="P-loop_NTPase"/>
</dbReference>
<dbReference type="InterPro" id="IPR004027">
    <property type="entry name" value="SEC_C_motif"/>
</dbReference>
<dbReference type="InterPro" id="IPR000185">
    <property type="entry name" value="SecA"/>
</dbReference>
<dbReference type="InterPro" id="IPR020937">
    <property type="entry name" value="SecA_CS"/>
</dbReference>
<dbReference type="InterPro" id="IPR011115">
    <property type="entry name" value="SecA_DEAD"/>
</dbReference>
<dbReference type="InterPro" id="IPR014018">
    <property type="entry name" value="SecA_motor_DEAD"/>
</dbReference>
<dbReference type="InterPro" id="IPR011130">
    <property type="entry name" value="SecA_preprotein_X-link_dom"/>
</dbReference>
<dbReference type="InterPro" id="IPR044722">
    <property type="entry name" value="SecA_SF2_C"/>
</dbReference>
<dbReference type="InterPro" id="IPR011116">
    <property type="entry name" value="SecA_Wing/Scaffold"/>
</dbReference>
<dbReference type="InterPro" id="IPR036266">
    <property type="entry name" value="SecA_Wing/Scaffold_sf"/>
</dbReference>
<dbReference type="InterPro" id="IPR036670">
    <property type="entry name" value="SecA_X-link_sf"/>
</dbReference>
<dbReference type="NCBIfam" id="NF009538">
    <property type="entry name" value="PRK12904.1"/>
    <property type="match status" value="1"/>
</dbReference>
<dbReference type="NCBIfam" id="TIGR00963">
    <property type="entry name" value="secA"/>
    <property type="match status" value="1"/>
</dbReference>
<dbReference type="PANTHER" id="PTHR30612:SF0">
    <property type="entry name" value="CHLOROPLAST PROTEIN-TRANSPORTING ATPASE"/>
    <property type="match status" value="1"/>
</dbReference>
<dbReference type="PANTHER" id="PTHR30612">
    <property type="entry name" value="SECA INNER MEMBRANE COMPONENT OF SEC PROTEIN SECRETION SYSTEM"/>
    <property type="match status" value="1"/>
</dbReference>
<dbReference type="Pfam" id="PF21090">
    <property type="entry name" value="P-loop_SecA"/>
    <property type="match status" value="1"/>
</dbReference>
<dbReference type="Pfam" id="PF02810">
    <property type="entry name" value="SEC-C"/>
    <property type="match status" value="1"/>
</dbReference>
<dbReference type="Pfam" id="PF07517">
    <property type="entry name" value="SecA_DEAD"/>
    <property type="match status" value="1"/>
</dbReference>
<dbReference type="Pfam" id="PF01043">
    <property type="entry name" value="SecA_PP_bind"/>
    <property type="match status" value="1"/>
</dbReference>
<dbReference type="Pfam" id="PF07516">
    <property type="entry name" value="SecA_SW"/>
    <property type="match status" value="1"/>
</dbReference>
<dbReference type="PRINTS" id="PR00906">
    <property type="entry name" value="SECA"/>
</dbReference>
<dbReference type="SMART" id="SM00957">
    <property type="entry name" value="SecA_DEAD"/>
    <property type="match status" value="1"/>
</dbReference>
<dbReference type="SMART" id="SM00958">
    <property type="entry name" value="SecA_PP_bind"/>
    <property type="match status" value="1"/>
</dbReference>
<dbReference type="SUPFAM" id="SSF81886">
    <property type="entry name" value="Helical scaffold and wing domains of SecA"/>
    <property type="match status" value="1"/>
</dbReference>
<dbReference type="SUPFAM" id="SSF52540">
    <property type="entry name" value="P-loop containing nucleoside triphosphate hydrolases"/>
    <property type="match status" value="2"/>
</dbReference>
<dbReference type="SUPFAM" id="SSF81767">
    <property type="entry name" value="Pre-protein crosslinking domain of SecA"/>
    <property type="match status" value="1"/>
</dbReference>
<dbReference type="PROSITE" id="PS01312">
    <property type="entry name" value="SECA"/>
    <property type="match status" value="1"/>
</dbReference>
<dbReference type="PROSITE" id="PS51196">
    <property type="entry name" value="SECA_MOTOR_DEAD"/>
    <property type="match status" value="1"/>
</dbReference>
<organism>
    <name type="scientific">Xanthomonas campestris pv. campestris (strain ATCC 33913 / DSM 3586 / NCPPB 528 / LMG 568 / P 25)</name>
    <dbReference type="NCBI Taxonomy" id="190485"/>
    <lineage>
        <taxon>Bacteria</taxon>
        <taxon>Pseudomonadati</taxon>
        <taxon>Pseudomonadota</taxon>
        <taxon>Gammaproteobacteria</taxon>
        <taxon>Lysobacterales</taxon>
        <taxon>Lysobacteraceae</taxon>
        <taxon>Xanthomonas</taxon>
    </lineage>
</organism>
<comment type="function">
    <text evidence="1">Part of the Sec protein translocase complex. Interacts with the SecYEG preprotein conducting channel. Has a central role in coupling the hydrolysis of ATP to the transfer of proteins into and across the cell membrane, serving both as a receptor for the preprotein-SecB complex and as an ATP-driven molecular motor driving the stepwise translocation of polypeptide chains across the membrane.</text>
</comment>
<comment type="catalytic activity">
    <reaction evidence="1">
        <text>ATP + H2O + cellular proteinSide 1 = ADP + phosphate + cellular proteinSide 2.</text>
        <dbReference type="EC" id="7.4.2.8"/>
    </reaction>
</comment>
<comment type="cofactor">
    <cofactor evidence="1">
        <name>Zn(2+)</name>
        <dbReference type="ChEBI" id="CHEBI:29105"/>
    </cofactor>
    <text evidence="1">May bind 1 zinc ion per subunit.</text>
</comment>
<comment type="subunit">
    <text evidence="1">Monomer and homodimer. Part of the essential Sec protein translocation apparatus which comprises SecA, SecYEG and auxiliary proteins SecDF-YajC and YidC.</text>
</comment>
<comment type="subcellular location">
    <subcellularLocation>
        <location evidence="1">Cell inner membrane</location>
        <topology evidence="1">Peripheral membrane protein</topology>
        <orientation evidence="1">Cytoplasmic side</orientation>
    </subcellularLocation>
    <subcellularLocation>
        <location evidence="1">Cytoplasm</location>
    </subcellularLocation>
    <text evidence="1">Distribution is 50-50.</text>
</comment>
<comment type="similarity">
    <text evidence="1">Belongs to the SecA family.</text>
</comment>
<reference key="1">
    <citation type="journal article" date="2002" name="Nature">
        <title>Comparison of the genomes of two Xanthomonas pathogens with differing host specificities.</title>
        <authorList>
            <person name="da Silva A.C.R."/>
            <person name="Ferro J.A."/>
            <person name="Reinach F.C."/>
            <person name="Farah C.S."/>
            <person name="Furlan L.R."/>
            <person name="Quaggio R.B."/>
            <person name="Monteiro-Vitorello C.B."/>
            <person name="Van Sluys M.A."/>
            <person name="Almeida N.F. Jr."/>
            <person name="Alves L.M.C."/>
            <person name="do Amaral A.M."/>
            <person name="Bertolini M.C."/>
            <person name="Camargo L.E.A."/>
            <person name="Camarotte G."/>
            <person name="Cannavan F."/>
            <person name="Cardozo J."/>
            <person name="Chambergo F."/>
            <person name="Ciapina L.P."/>
            <person name="Cicarelli R.M.B."/>
            <person name="Coutinho L.L."/>
            <person name="Cursino-Santos J.R."/>
            <person name="El-Dorry H."/>
            <person name="Faria J.B."/>
            <person name="Ferreira A.J.S."/>
            <person name="Ferreira R.C.C."/>
            <person name="Ferro M.I.T."/>
            <person name="Formighieri E.F."/>
            <person name="Franco M.C."/>
            <person name="Greggio C.C."/>
            <person name="Gruber A."/>
            <person name="Katsuyama A.M."/>
            <person name="Kishi L.T."/>
            <person name="Leite R.P."/>
            <person name="Lemos E.G.M."/>
            <person name="Lemos M.V.F."/>
            <person name="Locali E.C."/>
            <person name="Machado M.A."/>
            <person name="Madeira A.M.B.N."/>
            <person name="Martinez-Rossi N.M."/>
            <person name="Martins E.C."/>
            <person name="Meidanis J."/>
            <person name="Menck C.F.M."/>
            <person name="Miyaki C.Y."/>
            <person name="Moon D.H."/>
            <person name="Moreira L.M."/>
            <person name="Novo M.T.M."/>
            <person name="Okura V.K."/>
            <person name="Oliveira M.C."/>
            <person name="Oliveira V.R."/>
            <person name="Pereira H.A."/>
            <person name="Rossi A."/>
            <person name="Sena J.A.D."/>
            <person name="Silva C."/>
            <person name="de Souza R.F."/>
            <person name="Spinola L.A.F."/>
            <person name="Takita M.A."/>
            <person name="Tamura R.E."/>
            <person name="Teixeira E.C."/>
            <person name="Tezza R.I.D."/>
            <person name="Trindade dos Santos M."/>
            <person name="Truffi D."/>
            <person name="Tsai S.M."/>
            <person name="White F.F."/>
            <person name="Setubal J.C."/>
            <person name="Kitajima J.P."/>
        </authorList>
    </citation>
    <scope>NUCLEOTIDE SEQUENCE [LARGE SCALE GENOMIC DNA]</scope>
    <source>
        <strain>ATCC 33913 / DSM 3586 / NCPPB 528 / LMG 568 / P 25</strain>
    </source>
</reference>
<feature type="chain" id="PRO_0000321043" description="Protein translocase subunit SecA">
    <location>
        <begin position="1"/>
        <end position="912"/>
    </location>
</feature>
<feature type="region of interest" description="Disordered" evidence="2">
    <location>
        <begin position="855"/>
        <end position="912"/>
    </location>
</feature>
<feature type="compositionally biased region" description="Basic residues" evidence="2">
    <location>
        <begin position="902"/>
        <end position="912"/>
    </location>
</feature>
<feature type="binding site" evidence="1">
    <location>
        <position position="87"/>
    </location>
    <ligand>
        <name>ATP</name>
        <dbReference type="ChEBI" id="CHEBI:30616"/>
    </ligand>
</feature>
<feature type="binding site" evidence="1">
    <location>
        <begin position="105"/>
        <end position="109"/>
    </location>
    <ligand>
        <name>ATP</name>
        <dbReference type="ChEBI" id="CHEBI:30616"/>
    </ligand>
</feature>
<feature type="binding site" evidence="1">
    <location>
        <position position="508"/>
    </location>
    <ligand>
        <name>ATP</name>
        <dbReference type="ChEBI" id="CHEBI:30616"/>
    </ligand>
</feature>
<feature type="binding site" evidence="1">
    <location>
        <position position="896"/>
    </location>
    <ligand>
        <name>Zn(2+)</name>
        <dbReference type="ChEBI" id="CHEBI:29105"/>
    </ligand>
</feature>
<feature type="binding site" evidence="1">
    <location>
        <position position="898"/>
    </location>
    <ligand>
        <name>Zn(2+)</name>
        <dbReference type="ChEBI" id="CHEBI:29105"/>
    </ligand>
</feature>
<feature type="binding site" evidence="1">
    <location>
        <position position="907"/>
    </location>
    <ligand>
        <name>Zn(2+)</name>
        <dbReference type="ChEBI" id="CHEBI:29105"/>
    </ligand>
</feature>
<feature type="binding site" evidence="1">
    <location>
        <position position="908"/>
    </location>
    <ligand>
        <name>Zn(2+)</name>
        <dbReference type="ChEBI" id="CHEBI:29105"/>
    </ligand>
</feature>
<keyword id="KW-0067">ATP-binding</keyword>
<keyword id="KW-0997">Cell inner membrane</keyword>
<keyword id="KW-1003">Cell membrane</keyword>
<keyword id="KW-0963">Cytoplasm</keyword>
<keyword id="KW-0472">Membrane</keyword>
<keyword id="KW-0479">Metal-binding</keyword>
<keyword id="KW-0547">Nucleotide-binding</keyword>
<keyword id="KW-0653">Protein transport</keyword>
<keyword id="KW-1185">Reference proteome</keyword>
<keyword id="KW-1278">Translocase</keyword>
<keyword id="KW-0811">Translocation</keyword>
<keyword id="KW-0813">Transport</keyword>
<keyword id="KW-0862">Zinc</keyword>
<proteinExistence type="inferred from homology"/>
<name>SECA_XANCP</name>
<evidence type="ECO:0000255" key="1">
    <source>
        <dbReference type="HAMAP-Rule" id="MF_01382"/>
    </source>
</evidence>
<evidence type="ECO:0000256" key="2">
    <source>
        <dbReference type="SAM" id="MobiDB-lite"/>
    </source>
</evidence>
<sequence length="912" mass="102374">MINSLLTRVFGSRNERQLRQLNRLVTQINALEPTIEKLSDAELQAKTPEFKQRLAAGESLDKILPEAFAVCREASRRVLGMRHYDVQLIGGMVLHLGKIAEMRTGEGKTLVATLPVYLNALEGQGVHVVTVNDYLARRDAAQMGKLYNWLGLSVGVVYPGMPHSDKHAAYAADITYGTNNEFGFDYLRDNMALSRADRYQRKLHYAIVDEVDSILIDEARTPLIISGPADESPELYIRVNRIVPQLTKQESEEGEGDYWIDEKGKQVHLSEAGMGHAEELLLQAGILENADDGLYAAQNLSVVHHLNAALRAHAIYQRDVDYIVRDGEVVIVDEFTGRTLSGRRWSDGLHQAVEAKEGVPVQRENQTLASITFQNLFRMYKKLSGMTGTADTEAYEFQSIYGLEVVVIPTNRPTVRKDHPDQVFLNRKGKFNAVLADIEDCAKRGQPVLVGTTSIETSEMLSEHLRKAGVKHEVLNAKQHEREATIVANAGQPGAVTIATNMAGRGTDIVLGGSLEAEYHALGEDATEEARFKIKTDWQRRHDAVKAAGGLHIIGTERHESRRIDNQLRGRAGRQGDPGSSRFYLSLEDNLMRIFASDWVQKAMRMMGMKEDDVIEDRLVSRQIEKAQRKVEAHNFDIRKNLLDFDDVNNDQRKVIYAQRDDLLDAESVKDNVDGIRGDVIYDLVARFVPPNSVDEQWDLQGLEATLESELGMPLALRELAKTQEELDAEQIAAKVQTAVDAHFAEKEAAVGADTMRALEKHVMLTVLDQGWKEHLAKMDYLRQGIYLRGYAQKQPKQEYKKEAFELFSEMLENVKREVINLLARVRIRSEEEVAELEEQERRQAEARLLASQFQHQDAGGYGADEEVEQMQGGNAPVPVSQVTRDEPKVGRNDPCPCGSGKKYKHCHGQLS</sequence>